<protein>
    <recommendedName>
        <fullName evidence="1">Large ribosomal subunit protein uL13</fullName>
    </recommendedName>
    <alternativeName>
        <fullName evidence="2">50S ribosomal protein L13</fullName>
    </alternativeName>
</protein>
<gene>
    <name evidence="1" type="primary">rplM</name>
    <name type="ordered locus">LAF_1483</name>
</gene>
<reference key="1">
    <citation type="journal article" date="2008" name="DNA Res.">
        <title>Comparative genome analysis of Lactobacillus reuteri and Lactobacillus fermentum reveal a genomic island for reuterin and cobalamin production.</title>
        <authorList>
            <person name="Morita H."/>
            <person name="Toh H."/>
            <person name="Fukuda S."/>
            <person name="Horikawa H."/>
            <person name="Oshima K."/>
            <person name="Suzuki T."/>
            <person name="Murakami M."/>
            <person name="Hisamatsu S."/>
            <person name="Kato Y."/>
            <person name="Takizawa T."/>
            <person name="Fukuoka H."/>
            <person name="Yoshimura T."/>
            <person name="Itoh K."/>
            <person name="O'Sullivan D.J."/>
            <person name="McKay L.L."/>
            <person name="Ohno H."/>
            <person name="Kikuchi J."/>
            <person name="Masaoka T."/>
            <person name="Hattori M."/>
        </authorList>
    </citation>
    <scope>NUCLEOTIDE SEQUENCE [LARGE SCALE GENOMIC DNA]</scope>
    <source>
        <strain>NBRC 3956 / LMG 18251</strain>
    </source>
</reference>
<name>RL13_LIMF3</name>
<feature type="chain" id="PRO_1000144144" description="Large ribosomal subunit protein uL13">
    <location>
        <begin position="1"/>
        <end position="147"/>
    </location>
</feature>
<keyword id="KW-1185">Reference proteome</keyword>
<keyword id="KW-0687">Ribonucleoprotein</keyword>
<keyword id="KW-0689">Ribosomal protein</keyword>
<sequence>MRTTYMAKPGQVDRKWYVVDAKGISLGRLASTVASILRGKNKPTFTPHVDTGDYVIVINAAEVKLTGKKATGKIYYRHSNHPGGLKQRTAGDFLAKDPEKMVEQTIKGMLPHTSLGRKMGMKLHVYAGESHNQAAQKPEVLDITNLI</sequence>
<dbReference type="EMBL" id="AP008937">
    <property type="protein sequence ID" value="BAG27819.1"/>
    <property type="molecule type" value="Genomic_DNA"/>
</dbReference>
<dbReference type="RefSeq" id="WP_004562968.1">
    <property type="nucleotide sequence ID" value="NC_010610.1"/>
</dbReference>
<dbReference type="SMR" id="B2GDT7"/>
<dbReference type="GeneID" id="83716140"/>
<dbReference type="KEGG" id="lfe:LAF_1483"/>
<dbReference type="eggNOG" id="COG0102">
    <property type="taxonomic scope" value="Bacteria"/>
</dbReference>
<dbReference type="HOGENOM" id="CLU_082184_2_1_9"/>
<dbReference type="Proteomes" id="UP000001697">
    <property type="component" value="Chromosome"/>
</dbReference>
<dbReference type="GO" id="GO:0022625">
    <property type="term" value="C:cytosolic large ribosomal subunit"/>
    <property type="evidence" value="ECO:0007669"/>
    <property type="project" value="TreeGrafter"/>
</dbReference>
<dbReference type="GO" id="GO:0003729">
    <property type="term" value="F:mRNA binding"/>
    <property type="evidence" value="ECO:0007669"/>
    <property type="project" value="TreeGrafter"/>
</dbReference>
<dbReference type="GO" id="GO:0003735">
    <property type="term" value="F:structural constituent of ribosome"/>
    <property type="evidence" value="ECO:0007669"/>
    <property type="project" value="InterPro"/>
</dbReference>
<dbReference type="GO" id="GO:0017148">
    <property type="term" value="P:negative regulation of translation"/>
    <property type="evidence" value="ECO:0007669"/>
    <property type="project" value="TreeGrafter"/>
</dbReference>
<dbReference type="GO" id="GO:0006412">
    <property type="term" value="P:translation"/>
    <property type="evidence" value="ECO:0007669"/>
    <property type="project" value="UniProtKB-UniRule"/>
</dbReference>
<dbReference type="CDD" id="cd00392">
    <property type="entry name" value="Ribosomal_L13"/>
    <property type="match status" value="1"/>
</dbReference>
<dbReference type="FunFam" id="3.90.1180.10:FF:000001">
    <property type="entry name" value="50S ribosomal protein L13"/>
    <property type="match status" value="1"/>
</dbReference>
<dbReference type="Gene3D" id="3.90.1180.10">
    <property type="entry name" value="Ribosomal protein L13"/>
    <property type="match status" value="1"/>
</dbReference>
<dbReference type="HAMAP" id="MF_01366">
    <property type="entry name" value="Ribosomal_uL13"/>
    <property type="match status" value="1"/>
</dbReference>
<dbReference type="InterPro" id="IPR005822">
    <property type="entry name" value="Ribosomal_uL13"/>
</dbReference>
<dbReference type="InterPro" id="IPR005823">
    <property type="entry name" value="Ribosomal_uL13_bac-type"/>
</dbReference>
<dbReference type="InterPro" id="IPR023563">
    <property type="entry name" value="Ribosomal_uL13_CS"/>
</dbReference>
<dbReference type="InterPro" id="IPR036899">
    <property type="entry name" value="Ribosomal_uL13_sf"/>
</dbReference>
<dbReference type="NCBIfam" id="TIGR01066">
    <property type="entry name" value="rplM_bact"/>
    <property type="match status" value="1"/>
</dbReference>
<dbReference type="PANTHER" id="PTHR11545:SF2">
    <property type="entry name" value="LARGE RIBOSOMAL SUBUNIT PROTEIN UL13M"/>
    <property type="match status" value="1"/>
</dbReference>
<dbReference type="PANTHER" id="PTHR11545">
    <property type="entry name" value="RIBOSOMAL PROTEIN L13"/>
    <property type="match status" value="1"/>
</dbReference>
<dbReference type="Pfam" id="PF00572">
    <property type="entry name" value="Ribosomal_L13"/>
    <property type="match status" value="1"/>
</dbReference>
<dbReference type="PIRSF" id="PIRSF002181">
    <property type="entry name" value="Ribosomal_L13"/>
    <property type="match status" value="1"/>
</dbReference>
<dbReference type="SUPFAM" id="SSF52161">
    <property type="entry name" value="Ribosomal protein L13"/>
    <property type="match status" value="1"/>
</dbReference>
<dbReference type="PROSITE" id="PS00783">
    <property type="entry name" value="RIBOSOMAL_L13"/>
    <property type="match status" value="1"/>
</dbReference>
<evidence type="ECO:0000255" key="1">
    <source>
        <dbReference type="HAMAP-Rule" id="MF_01366"/>
    </source>
</evidence>
<evidence type="ECO:0000305" key="2"/>
<organism>
    <name type="scientific">Limosilactobacillus fermentum (strain NBRC 3956 / LMG 18251)</name>
    <name type="common">Lactobacillus fermentum</name>
    <dbReference type="NCBI Taxonomy" id="334390"/>
    <lineage>
        <taxon>Bacteria</taxon>
        <taxon>Bacillati</taxon>
        <taxon>Bacillota</taxon>
        <taxon>Bacilli</taxon>
        <taxon>Lactobacillales</taxon>
        <taxon>Lactobacillaceae</taxon>
        <taxon>Limosilactobacillus</taxon>
    </lineage>
</organism>
<comment type="function">
    <text evidence="1">This protein is one of the early assembly proteins of the 50S ribosomal subunit, although it is not seen to bind rRNA by itself. It is important during the early stages of 50S assembly.</text>
</comment>
<comment type="subunit">
    <text evidence="1">Part of the 50S ribosomal subunit.</text>
</comment>
<comment type="similarity">
    <text evidence="1">Belongs to the universal ribosomal protein uL13 family.</text>
</comment>
<accession>B2GDT7</accession>
<proteinExistence type="inferred from homology"/>